<evidence type="ECO:0000250" key="1"/>
<evidence type="ECO:0000250" key="2">
    <source>
        <dbReference type="UniProtKB" id="P06801"/>
    </source>
</evidence>
<evidence type="ECO:0000250" key="3">
    <source>
        <dbReference type="UniProtKB" id="P23368"/>
    </source>
</evidence>
<evidence type="ECO:0000250" key="4">
    <source>
        <dbReference type="UniProtKB" id="P48163"/>
    </source>
</evidence>
<evidence type="ECO:0000305" key="5"/>
<name>MAOX_PIG</name>
<comment type="function">
    <text evidence="4">Catalyzes the oxidative decarboxylation of (S)-malate in the presence of NADP(+) and divalent metal ions, and decarboxylation of oxaloacetate.</text>
</comment>
<comment type="catalytic activity">
    <reaction evidence="4">
        <text>(S)-malate + NADP(+) = pyruvate + CO2 + NADPH</text>
        <dbReference type="Rhea" id="RHEA:18253"/>
        <dbReference type="ChEBI" id="CHEBI:15361"/>
        <dbReference type="ChEBI" id="CHEBI:15589"/>
        <dbReference type="ChEBI" id="CHEBI:16526"/>
        <dbReference type="ChEBI" id="CHEBI:57783"/>
        <dbReference type="ChEBI" id="CHEBI:58349"/>
        <dbReference type="EC" id="1.1.1.40"/>
    </reaction>
    <physiologicalReaction direction="left-to-right" evidence="4">
        <dbReference type="Rhea" id="RHEA:18254"/>
    </physiologicalReaction>
    <physiologicalReaction direction="right-to-left" evidence="4">
        <dbReference type="Rhea" id="RHEA:18255"/>
    </physiologicalReaction>
</comment>
<comment type="catalytic activity">
    <reaction evidence="4">
        <text>oxaloacetate + H(+) = pyruvate + CO2</text>
        <dbReference type="Rhea" id="RHEA:15641"/>
        <dbReference type="ChEBI" id="CHEBI:15361"/>
        <dbReference type="ChEBI" id="CHEBI:15378"/>
        <dbReference type="ChEBI" id="CHEBI:16452"/>
        <dbReference type="ChEBI" id="CHEBI:16526"/>
        <dbReference type="EC" id="1.1.1.40"/>
    </reaction>
    <physiologicalReaction direction="left-to-right" evidence="4">
        <dbReference type="Rhea" id="RHEA:15642"/>
    </physiologicalReaction>
</comment>
<comment type="cofactor">
    <cofactor evidence="4">
        <name>Mg(2+)</name>
        <dbReference type="ChEBI" id="CHEBI:18420"/>
    </cofactor>
    <cofactor evidence="4">
        <name>Mn(2+)</name>
        <dbReference type="ChEBI" id="CHEBI:29035"/>
    </cofactor>
    <text evidence="4">Divalent metal cations. Prefers magnesium or manganese.</text>
</comment>
<comment type="subunit">
    <text evidence="4">Homotetramer.</text>
</comment>
<comment type="subcellular location">
    <subcellularLocation>
        <location evidence="4">Cytoplasm</location>
    </subcellularLocation>
</comment>
<comment type="similarity">
    <text evidence="5">Belongs to the malic enzymes family.</text>
</comment>
<organism>
    <name type="scientific">Sus scrofa</name>
    <name type="common">Pig</name>
    <dbReference type="NCBI Taxonomy" id="9823"/>
    <lineage>
        <taxon>Eukaryota</taxon>
        <taxon>Metazoa</taxon>
        <taxon>Chordata</taxon>
        <taxon>Craniata</taxon>
        <taxon>Vertebrata</taxon>
        <taxon>Euteleostomi</taxon>
        <taxon>Mammalia</taxon>
        <taxon>Eutheria</taxon>
        <taxon>Laurasiatheria</taxon>
        <taxon>Artiodactyla</taxon>
        <taxon>Suina</taxon>
        <taxon>Suidae</taxon>
        <taxon>Sus</taxon>
    </lineage>
</organism>
<feature type="chain" id="PRO_0000160194" description="NADP-dependent malic enzyme">
    <location>
        <begin position="1" status="less than"/>
        <end position="557"/>
    </location>
</feature>
<feature type="active site" description="Proton donor" evidence="3">
    <location>
        <position position="88"/>
    </location>
</feature>
<feature type="active site" description="Proton acceptor" evidence="3">
    <location>
        <position position="159"/>
    </location>
</feature>
<feature type="binding site" evidence="1">
    <location>
        <position position="141"/>
    </location>
    <ligand>
        <name>NADP(+)</name>
        <dbReference type="ChEBI" id="CHEBI:58349"/>
    </ligand>
</feature>
<feature type="binding site" evidence="3">
    <location>
        <position position="231"/>
    </location>
    <ligand>
        <name>a divalent metal cation</name>
        <dbReference type="ChEBI" id="CHEBI:60240"/>
    </ligand>
</feature>
<feature type="binding site" evidence="3">
    <location>
        <position position="232"/>
    </location>
    <ligand>
        <name>a divalent metal cation</name>
        <dbReference type="ChEBI" id="CHEBI:60240"/>
    </ligand>
</feature>
<feature type="binding site" evidence="3">
    <location>
        <position position="255"/>
    </location>
    <ligand>
        <name>a divalent metal cation</name>
        <dbReference type="ChEBI" id="CHEBI:60240"/>
    </ligand>
</feature>
<feature type="binding site" evidence="1">
    <location>
        <position position="255"/>
    </location>
    <ligand>
        <name>NADP(+)</name>
        <dbReference type="ChEBI" id="CHEBI:58349"/>
    </ligand>
</feature>
<feature type="binding site" evidence="1">
    <location>
        <position position="394"/>
    </location>
    <ligand>
        <name>NADP(+)</name>
        <dbReference type="ChEBI" id="CHEBI:58349"/>
    </ligand>
</feature>
<feature type="site" description="Important for activity" evidence="1">
    <location>
        <position position="255"/>
    </location>
</feature>
<feature type="modified residue" description="Phosphoserine" evidence="2">
    <location>
        <position position="322"/>
    </location>
</feature>
<feature type="non-terminal residue">
    <location>
        <position position="1"/>
    </location>
</feature>
<gene>
    <name type="primary">ME1</name>
</gene>
<protein>
    <recommendedName>
        <fullName>NADP-dependent malic enzyme</fullName>
        <shortName>NADP-ME</shortName>
        <ecNumber evidence="4">1.1.1.40</ecNumber>
    </recommendedName>
    <alternativeName>
        <fullName>Malic enzyme 1</fullName>
    </alternativeName>
</protein>
<keyword id="KW-0963">Cytoplasm</keyword>
<keyword id="KW-0479">Metal-binding</keyword>
<keyword id="KW-0521">NADP</keyword>
<keyword id="KW-0560">Oxidoreductase</keyword>
<keyword id="KW-0597">Phosphoprotein</keyword>
<keyword id="KW-1185">Reference proteome</keyword>
<reference key="1">
    <citation type="journal article" date="1996" name="Mamm. Genome">
        <title>Swine cytosolic malic enzyme: cDNA cloning, sequencing, and localization.</title>
        <authorList>
            <person name="Nunes M."/>
            <person name="Lahbib-Mansais Y."/>
            <person name="Geffrotin C."/>
            <person name="Yerle M."/>
            <person name="Vaiman M."/>
            <person name="Renard C."/>
        </authorList>
    </citation>
    <scope>NUCLEOTIDE SEQUENCE [MRNA]</scope>
    <source>
        <strain>Large white</strain>
        <tissue>Muscle</tissue>
    </source>
</reference>
<accession>Q29558</accession>
<proteinExistence type="evidence at transcript level"/>
<dbReference type="EC" id="1.1.1.40" evidence="4"/>
<dbReference type="EMBL" id="X93016">
    <property type="protein sequence ID" value="CAA63599.1"/>
    <property type="molecule type" value="mRNA"/>
</dbReference>
<dbReference type="SMR" id="Q29558"/>
<dbReference type="FunCoup" id="Q29558">
    <property type="interactions" value="847"/>
</dbReference>
<dbReference type="IntAct" id="Q29558">
    <property type="interactions" value="1"/>
</dbReference>
<dbReference type="STRING" id="9823.ENSSSCP00000071155"/>
<dbReference type="PaxDb" id="9823-ENSSSCP00000004804"/>
<dbReference type="PeptideAtlas" id="Q29558"/>
<dbReference type="eggNOG" id="KOG1257">
    <property type="taxonomic scope" value="Eukaryota"/>
</dbReference>
<dbReference type="InParanoid" id="Q29558"/>
<dbReference type="Proteomes" id="UP000008227">
    <property type="component" value="Unplaced"/>
</dbReference>
<dbReference type="Proteomes" id="UP000314985">
    <property type="component" value="Unplaced"/>
</dbReference>
<dbReference type="Proteomes" id="UP000694570">
    <property type="component" value="Unplaced"/>
</dbReference>
<dbReference type="Proteomes" id="UP000694571">
    <property type="component" value="Unplaced"/>
</dbReference>
<dbReference type="Proteomes" id="UP000694720">
    <property type="component" value="Unplaced"/>
</dbReference>
<dbReference type="Proteomes" id="UP000694722">
    <property type="component" value="Unplaced"/>
</dbReference>
<dbReference type="Proteomes" id="UP000694723">
    <property type="component" value="Unplaced"/>
</dbReference>
<dbReference type="Proteomes" id="UP000694724">
    <property type="component" value="Unplaced"/>
</dbReference>
<dbReference type="Proteomes" id="UP000694725">
    <property type="component" value="Unplaced"/>
</dbReference>
<dbReference type="Proteomes" id="UP000694726">
    <property type="component" value="Unplaced"/>
</dbReference>
<dbReference type="Proteomes" id="UP000694727">
    <property type="component" value="Unplaced"/>
</dbReference>
<dbReference type="Proteomes" id="UP000694728">
    <property type="component" value="Unplaced"/>
</dbReference>
<dbReference type="GO" id="GO:0005829">
    <property type="term" value="C:cytosol"/>
    <property type="evidence" value="ECO:0000250"/>
    <property type="project" value="UniProtKB"/>
</dbReference>
<dbReference type="GO" id="GO:0005739">
    <property type="term" value="C:mitochondrion"/>
    <property type="evidence" value="ECO:0000318"/>
    <property type="project" value="GO_Central"/>
</dbReference>
<dbReference type="GO" id="GO:0000287">
    <property type="term" value="F:magnesium ion binding"/>
    <property type="evidence" value="ECO:0000250"/>
    <property type="project" value="UniProtKB"/>
</dbReference>
<dbReference type="GO" id="GO:0004473">
    <property type="term" value="F:malate dehydrogenase (decarboxylating) (NADP+) activity"/>
    <property type="evidence" value="ECO:0000250"/>
    <property type="project" value="UniProtKB"/>
</dbReference>
<dbReference type="GO" id="GO:0004470">
    <property type="term" value="F:malic enzyme activity"/>
    <property type="evidence" value="ECO:0000250"/>
    <property type="project" value="UniProtKB"/>
</dbReference>
<dbReference type="GO" id="GO:0030145">
    <property type="term" value="F:manganese ion binding"/>
    <property type="evidence" value="ECO:0000250"/>
    <property type="project" value="UniProtKB"/>
</dbReference>
<dbReference type="GO" id="GO:0051287">
    <property type="term" value="F:NAD binding"/>
    <property type="evidence" value="ECO:0007669"/>
    <property type="project" value="InterPro"/>
</dbReference>
<dbReference type="GO" id="GO:0008948">
    <property type="term" value="F:oxaloacetate decarboxylase activity"/>
    <property type="evidence" value="ECO:0000250"/>
    <property type="project" value="UniProtKB"/>
</dbReference>
<dbReference type="GO" id="GO:0006108">
    <property type="term" value="P:malate metabolic process"/>
    <property type="evidence" value="ECO:0000250"/>
    <property type="project" value="UniProtKB"/>
</dbReference>
<dbReference type="GO" id="GO:0051289">
    <property type="term" value="P:protein homotetramerization"/>
    <property type="evidence" value="ECO:0000250"/>
    <property type="project" value="UniProtKB"/>
</dbReference>
<dbReference type="GO" id="GO:0006090">
    <property type="term" value="P:pyruvate metabolic process"/>
    <property type="evidence" value="ECO:0000318"/>
    <property type="project" value="GO_Central"/>
</dbReference>
<dbReference type="GO" id="GO:0009725">
    <property type="term" value="P:response to hormone"/>
    <property type="evidence" value="ECO:0000250"/>
    <property type="project" value="UniProtKB"/>
</dbReference>
<dbReference type="CDD" id="cd05312">
    <property type="entry name" value="NAD_bind_1_malic_enz"/>
    <property type="match status" value="1"/>
</dbReference>
<dbReference type="FunFam" id="3.40.50.10380:FF:000004">
    <property type="entry name" value="Malic enzyme"/>
    <property type="match status" value="1"/>
</dbReference>
<dbReference type="FunFam" id="3.40.50.720:FF:000060">
    <property type="entry name" value="Malic enzyme"/>
    <property type="match status" value="1"/>
</dbReference>
<dbReference type="Gene3D" id="3.40.50.10380">
    <property type="entry name" value="Malic enzyme, N-terminal domain"/>
    <property type="match status" value="1"/>
</dbReference>
<dbReference type="Gene3D" id="3.40.50.720">
    <property type="entry name" value="NAD(P)-binding Rossmann-like Domain"/>
    <property type="match status" value="1"/>
</dbReference>
<dbReference type="InterPro" id="IPR046346">
    <property type="entry name" value="Aminoacid_DH-like_N_sf"/>
</dbReference>
<dbReference type="InterPro" id="IPR015884">
    <property type="entry name" value="Malic_enzyme_CS"/>
</dbReference>
<dbReference type="InterPro" id="IPR012301">
    <property type="entry name" value="Malic_N_dom"/>
</dbReference>
<dbReference type="InterPro" id="IPR037062">
    <property type="entry name" value="Malic_N_dom_sf"/>
</dbReference>
<dbReference type="InterPro" id="IPR012302">
    <property type="entry name" value="Malic_NAD-bd"/>
</dbReference>
<dbReference type="InterPro" id="IPR001891">
    <property type="entry name" value="Malic_OxRdtase"/>
</dbReference>
<dbReference type="InterPro" id="IPR036291">
    <property type="entry name" value="NAD(P)-bd_dom_sf"/>
</dbReference>
<dbReference type="NCBIfam" id="NF010052">
    <property type="entry name" value="PRK13529.1"/>
    <property type="match status" value="1"/>
</dbReference>
<dbReference type="PANTHER" id="PTHR23406">
    <property type="entry name" value="MALIC ENZYME-RELATED"/>
    <property type="match status" value="1"/>
</dbReference>
<dbReference type="PANTHER" id="PTHR23406:SF17">
    <property type="entry name" value="NADP-DEPENDENT MALIC ENZYME"/>
    <property type="match status" value="1"/>
</dbReference>
<dbReference type="Pfam" id="PF00390">
    <property type="entry name" value="malic"/>
    <property type="match status" value="1"/>
</dbReference>
<dbReference type="Pfam" id="PF03949">
    <property type="entry name" value="Malic_M"/>
    <property type="match status" value="1"/>
</dbReference>
<dbReference type="PIRSF" id="PIRSF000106">
    <property type="entry name" value="ME"/>
    <property type="match status" value="1"/>
</dbReference>
<dbReference type="PRINTS" id="PR00072">
    <property type="entry name" value="MALOXRDTASE"/>
</dbReference>
<dbReference type="SMART" id="SM01274">
    <property type="entry name" value="malic"/>
    <property type="match status" value="1"/>
</dbReference>
<dbReference type="SMART" id="SM00919">
    <property type="entry name" value="Malic_M"/>
    <property type="match status" value="1"/>
</dbReference>
<dbReference type="SUPFAM" id="SSF53223">
    <property type="entry name" value="Aminoacid dehydrogenase-like, N-terminal domain"/>
    <property type="match status" value="1"/>
</dbReference>
<dbReference type="SUPFAM" id="SSF51735">
    <property type="entry name" value="NAD(P)-binding Rossmann-fold domains"/>
    <property type="match status" value="1"/>
</dbReference>
<dbReference type="PROSITE" id="PS00331">
    <property type="entry name" value="MALIC_ENZYMES"/>
    <property type="match status" value="1"/>
</dbReference>
<sequence length="557" mass="62006">GYGLTRIPHLNKDLAFTLEERQQLNIHGLLPPCFISQDIQVLRVIKNFERLNSDFDRYLLLMDLQDRNEKLFYKVLMSDIEKFMPIVYTPTVGLACQQYSLAFRKPRGLFISIHDRGHVASVLNAWPEDVIKAVVVTDGERILGLGDLGCNGMGIPVGKLALYTACGGVNPQECLPVILDVGTENEELLKDPLYIGLRQRRVRGPEYDDFLDEFMEAVSSKYGMNCLIQFEDFANINAFRLLKKYQNQYCTFNDDIQGTASVAVAGILAALRITKNKLSDQTILFQGAGEAALGIAHLIVMAMEKEGVPKEKAIKKIWLVDSKGLIVKGRAALTNEKEEFAHEHEEMKNLEAIVQDIKPTALIGVAAIGGAFSEQILKDMAAFNERPIIFALSNPTSKAECTAERGYTLTQGRAIFASGSPFDPVTLPSGQTLYPGQGNNSYVFPGVALAVVACGLRHITDKIFLTTAEVIAQQVSDKHLEEGRLYPPLNTIRDVSLKIAEKIVRDAYQEKTATIYPEPSNKEAFVRSQMYSTDYDQILPDGYSWPEEAQKIQTKLD</sequence>